<proteinExistence type="predicted"/>
<gene>
    <name type="primary">yosJ</name>
    <name type="ordered locus">BSU20100</name>
</gene>
<sequence length="64" mass="7819">MIQGFYKDQKLHLLEDPMQQYTVMKVEENAVCVYRWIDDYRHKIERFTDVEEAKKLLGEGWPKQ</sequence>
<accession>O31879</accession>
<name>YOSJ_BACSU</name>
<keyword id="KW-1185">Reference proteome</keyword>
<protein>
    <recommendedName>
        <fullName>SPbeta prophage-derived uncharacterized protein YosJ</fullName>
    </recommendedName>
</protein>
<feature type="chain" id="PRO_0000370264" description="SPbeta prophage-derived uncharacterized protein YosJ">
    <location>
        <begin position="1"/>
        <end position="64"/>
    </location>
</feature>
<reference key="1">
    <citation type="journal article" date="1997" name="Nature">
        <title>The complete genome sequence of the Gram-positive bacterium Bacillus subtilis.</title>
        <authorList>
            <person name="Kunst F."/>
            <person name="Ogasawara N."/>
            <person name="Moszer I."/>
            <person name="Albertini A.M."/>
            <person name="Alloni G."/>
            <person name="Azevedo V."/>
            <person name="Bertero M.G."/>
            <person name="Bessieres P."/>
            <person name="Bolotin A."/>
            <person name="Borchert S."/>
            <person name="Borriss R."/>
            <person name="Boursier L."/>
            <person name="Brans A."/>
            <person name="Braun M."/>
            <person name="Brignell S.C."/>
            <person name="Bron S."/>
            <person name="Brouillet S."/>
            <person name="Bruschi C.V."/>
            <person name="Caldwell B."/>
            <person name="Capuano V."/>
            <person name="Carter N.M."/>
            <person name="Choi S.-K."/>
            <person name="Codani J.-J."/>
            <person name="Connerton I.F."/>
            <person name="Cummings N.J."/>
            <person name="Daniel R.A."/>
            <person name="Denizot F."/>
            <person name="Devine K.M."/>
            <person name="Duesterhoeft A."/>
            <person name="Ehrlich S.D."/>
            <person name="Emmerson P.T."/>
            <person name="Entian K.-D."/>
            <person name="Errington J."/>
            <person name="Fabret C."/>
            <person name="Ferrari E."/>
            <person name="Foulger D."/>
            <person name="Fritz C."/>
            <person name="Fujita M."/>
            <person name="Fujita Y."/>
            <person name="Fuma S."/>
            <person name="Galizzi A."/>
            <person name="Galleron N."/>
            <person name="Ghim S.-Y."/>
            <person name="Glaser P."/>
            <person name="Goffeau A."/>
            <person name="Golightly E.J."/>
            <person name="Grandi G."/>
            <person name="Guiseppi G."/>
            <person name="Guy B.J."/>
            <person name="Haga K."/>
            <person name="Haiech J."/>
            <person name="Harwood C.R."/>
            <person name="Henaut A."/>
            <person name="Hilbert H."/>
            <person name="Holsappel S."/>
            <person name="Hosono S."/>
            <person name="Hullo M.-F."/>
            <person name="Itaya M."/>
            <person name="Jones L.-M."/>
            <person name="Joris B."/>
            <person name="Karamata D."/>
            <person name="Kasahara Y."/>
            <person name="Klaerr-Blanchard M."/>
            <person name="Klein C."/>
            <person name="Kobayashi Y."/>
            <person name="Koetter P."/>
            <person name="Koningstein G."/>
            <person name="Krogh S."/>
            <person name="Kumano M."/>
            <person name="Kurita K."/>
            <person name="Lapidus A."/>
            <person name="Lardinois S."/>
            <person name="Lauber J."/>
            <person name="Lazarevic V."/>
            <person name="Lee S.-M."/>
            <person name="Levine A."/>
            <person name="Liu H."/>
            <person name="Masuda S."/>
            <person name="Mauel C."/>
            <person name="Medigue C."/>
            <person name="Medina N."/>
            <person name="Mellado R.P."/>
            <person name="Mizuno M."/>
            <person name="Moestl D."/>
            <person name="Nakai S."/>
            <person name="Noback M."/>
            <person name="Noone D."/>
            <person name="O'Reilly M."/>
            <person name="Ogawa K."/>
            <person name="Ogiwara A."/>
            <person name="Oudega B."/>
            <person name="Park S.-H."/>
            <person name="Parro V."/>
            <person name="Pohl T.M."/>
            <person name="Portetelle D."/>
            <person name="Porwollik S."/>
            <person name="Prescott A.M."/>
            <person name="Presecan E."/>
            <person name="Pujic P."/>
            <person name="Purnelle B."/>
            <person name="Rapoport G."/>
            <person name="Rey M."/>
            <person name="Reynolds S."/>
            <person name="Rieger M."/>
            <person name="Rivolta C."/>
            <person name="Rocha E."/>
            <person name="Roche B."/>
            <person name="Rose M."/>
            <person name="Sadaie Y."/>
            <person name="Sato T."/>
            <person name="Scanlan E."/>
            <person name="Schleich S."/>
            <person name="Schroeter R."/>
            <person name="Scoffone F."/>
            <person name="Sekiguchi J."/>
            <person name="Sekowska A."/>
            <person name="Seror S.J."/>
            <person name="Serror P."/>
            <person name="Shin B.-S."/>
            <person name="Soldo B."/>
            <person name="Sorokin A."/>
            <person name="Tacconi E."/>
            <person name="Takagi T."/>
            <person name="Takahashi H."/>
            <person name="Takemaru K."/>
            <person name="Takeuchi M."/>
            <person name="Tamakoshi A."/>
            <person name="Tanaka T."/>
            <person name="Terpstra P."/>
            <person name="Tognoni A."/>
            <person name="Tosato V."/>
            <person name="Uchiyama S."/>
            <person name="Vandenbol M."/>
            <person name="Vannier F."/>
            <person name="Vassarotti A."/>
            <person name="Viari A."/>
            <person name="Wambutt R."/>
            <person name="Wedler E."/>
            <person name="Wedler H."/>
            <person name="Weitzenegger T."/>
            <person name="Winters P."/>
            <person name="Wipat A."/>
            <person name="Yamamoto H."/>
            <person name="Yamane K."/>
            <person name="Yasumoto K."/>
            <person name="Yata K."/>
            <person name="Yoshida K."/>
            <person name="Yoshikawa H.-F."/>
            <person name="Zumstein E."/>
            <person name="Yoshikawa H."/>
            <person name="Danchin A."/>
        </authorList>
    </citation>
    <scope>NUCLEOTIDE SEQUENCE [LARGE SCALE GENOMIC DNA]</scope>
    <source>
        <strain>168</strain>
    </source>
</reference>
<organism>
    <name type="scientific">Bacillus subtilis (strain 168)</name>
    <dbReference type="NCBI Taxonomy" id="224308"/>
    <lineage>
        <taxon>Bacteria</taxon>
        <taxon>Bacillati</taxon>
        <taxon>Bacillota</taxon>
        <taxon>Bacilli</taxon>
        <taxon>Bacillales</taxon>
        <taxon>Bacillaceae</taxon>
        <taxon>Bacillus</taxon>
    </lineage>
</organism>
<dbReference type="EMBL" id="AL009126">
    <property type="protein sequence ID" value="CAB13902.1"/>
    <property type="molecule type" value="Genomic_DNA"/>
</dbReference>
<dbReference type="RefSeq" id="NP_389892.1">
    <property type="nucleotide sequence ID" value="NC_000964.3"/>
</dbReference>
<dbReference type="RefSeq" id="WP_004399360.1">
    <property type="nucleotide sequence ID" value="NZ_OZ025638.1"/>
</dbReference>
<dbReference type="SMR" id="O31879"/>
<dbReference type="FunCoup" id="O31879">
    <property type="interactions" value="48"/>
</dbReference>
<dbReference type="STRING" id="224308.BSU20100"/>
<dbReference type="PaxDb" id="224308-BSU20100"/>
<dbReference type="EnsemblBacteria" id="CAB13902">
    <property type="protein sequence ID" value="CAB13902"/>
    <property type="gene ID" value="BSU_20100"/>
</dbReference>
<dbReference type="GeneID" id="939556"/>
<dbReference type="KEGG" id="bsu:BSU20100"/>
<dbReference type="PATRIC" id="fig|224308.179.peg.2200"/>
<dbReference type="InParanoid" id="O31879"/>
<dbReference type="OrthoDB" id="2889657at2"/>
<dbReference type="BioCyc" id="BSUB:BSU20100-MONOMER"/>
<dbReference type="Proteomes" id="UP000001570">
    <property type="component" value="Chromosome"/>
</dbReference>